<protein>
    <recommendedName>
        <fullName>GTPase Era</fullName>
    </recommendedName>
</protein>
<proteinExistence type="evidence at protein level"/>
<accession>P0A3C4</accession>
<accession>Q9XDG9</accession>
<comment type="function">
    <text evidence="1 4 5">An essential GTPase that binds both GDP and GTP, with rapid nucleotide exchange. Plays a role in 16S rRNA processing and 30S ribosomal subunit biogenesis and possibly also in cell cycle regulation and energy metabolism (By similarity). Complements an E.coli era disruption mutant. Binds 16S rRNA as well as poly(U) RNA, binding to the latter is inhibited by liposomes.</text>
</comment>
<comment type="biophysicochemical properties">
    <kinetics>
        <KM evidence="4">430 uM for GTP</KM>
    </kinetics>
</comment>
<comment type="subunit">
    <text evidence="1">Monomer.</text>
</comment>
<comment type="subcellular location">
    <subcellularLocation>
        <location>Cytoplasm</location>
    </subcellularLocation>
    <subcellularLocation>
        <location>Cell membrane</location>
        <topology>Peripheral membrane protein</topology>
    </subcellularLocation>
</comment>
<comment type="domain">
    <text>The Era-type G (guanine nucleotide-binding) domain has GTPase activity, while the C-terminal KH type-2 domain is required for 16S rRNA binding and for membrane localization. Neither rRNA binding nor membrane localization require the N-terminal G domain, and the GTPase does not require the KH domain.</text>
</comment>
<comment type="miscellaneous">
    <text>It is estimated there is 0.63 ng Era per ug total cell protein in this strain.</text>
</comment>
<comment type="similarity">
    <text evidence="3 6">Belongs to the TRAFAC class TrmE-Era-EngA-EngB-Septin-like GTPase superfamily. Era GTPase family.</text>
</comment>
<evidence type="ECO:0000250" key="1"/>
<evidence type="ECO:0000255" key="2"/>
<evidence type="ECO:0000255" key="3">
    <source>
        <dbReference type="PROSITE-ProRule" id="PRU01050"/>
    </source>
</evidence>
<evidence type="ECO:0000269" key="4">
    <source>
    </source>
</evidence>
<evidence type="ECO:0000269" key="5">
    <source>
    </source>
</evidence>
<evidence type="ECO:0000305" key="6"/>
<organism>
    <name type="scientific">Streptococcus pneumoniae (strain ATCC BAA-255 / R6)</name>
    <dbReference type="NCBI Taxonomy" id="171101"/>
    <lineage>
        <taxon>Bacteria</taxon>
        <taxon>Bacillati</taxon>
        <taxon>Bacillota</taxon>
        <taxon>Bacilli</taxon>
        <taxon>Lactobacillales</taxon>
        <taxon>Streptococcaceae</taxon>
        <taxon>Streptococcus</taxon>
    </lineage>
</organism>
<feature type="chain" id="PRO_0000180059" description="GTPase Era">
    <location>
        <begin position="1"/>
        <end position="299"/>
    </location>
</feature>
<feature type="domain" description="Era-type G" evidence="3">
    <location>
        <begin position="4"/>
        <end position="171"/>
    </location>
</feature>
<feature type="domain" description="KH type-2">
    <location>
        <begin position="202"/>
        <end position="280"/>
    </location>
</feature>
<feature type="region of interest" description="G1" evidence="3">
    <location>
        <begin position="12"/>
        <end position="19"/>
    </location>
</feature>
<feature type="region of interest" description="G2" evidence="3">
    <location>
        <begin position="38"/>
        <end position="42"/>
    </location>
</feature>
<feature type="region of interest" description="G3" evidence="3">
    <location>
        <begin position="59"/>
        <end position="62"/>
    </location>
</feature>
<feature type="region of interest" description="G4" evidence="3">
    <location>
        <begin position="121"/>
        <end position="124"/>
    </location>
</feature>
<feature type="region of interest" description="G5" evidence="3">
    <location>
        <begin position="150"/>
        <end position="152"/>
    </location>
</feature>
<feature type="region of interest" description="Required to associate with cell membrane, for complmentation of E.coli disruption, increases affinity for GTP but decreases GTP hydrolysis">
    <location>
        <begin position="232"/>
        <end position="299"/>
    </location>
</feature>
<feature type="binding site" evidence="2">
    <location>
        <begin position="12"/>
        <end position="19"/>
    </location>
    <ligand>
        <name>GTP</name>
        <dbReference type="ChEBI" id="CHEBI:37565"/>
    </ligand>
</feature>
<feature type="binding site" evidence="2">
    <location>
        <begin position="59"/>
        <end position="63"/>
    </location>
    <ligand>
        <name>GTP</name>
        <dbReference type="ChEBI" id="CHEBI:37565"/>
    </ligand>
</feature>
<feature type="binding site" evidence="2">
    <location>
        <begin position="121"/>
        <end position="124"/>
    </location>
    <ligand>
        <name>GTP</name>
        <dbReference type="ChEBI" id="CHEBI:37565"/>
    </ligand>
</feature>
<keyword id="KW-1003">Cell membrane</keyword>
<keyword id="KW-0963">Cytoplasm</keyword>
<keyword id="KW-0342">GTP-binding</keyword>
<keyword id="KW-0472">Membrane</keyword>
<keyword id="KW-0547">Nucleotide-binding</keyword>
<keyword id="KW-1185">Reference proteome</keyword>
<keyword id="KW-0690">Ribosome biogenesis</keyword>
<keyword id="KW-0694">RNA-binding</keyword>
<keyword id="KW-0699">rRNA-binding</keyword>
<reference key="1">
    <citation type="journal article" date="1999" name="Microbiology">
        <title>Biochemical and molecular analyses of the C-terminal domain of Era GTPase from Streptococcus pneumoniae.</title>
        <authorList>
            <person name="Zhao G."/>
            <person name="Meier T.I."/>
            <person name="Peery R.B."/>
            <person name="Matsushima P."/>
            <person name="Skatrud P.L."/>
        </authorList>
    </citation>
    <scope>NUCLEOTIDE SEQUENCE [GENOMIC DNA]</scope>
    <scope>FUNCTION AS GTPASE</scope>
    <scope>BIOPHYSICOCHEMICAL PROPERTIES</scope>
    <scope>SUBCELLULAR LOCATION</scope>
    <scope>ABILITY TO COMPLEMENT E.COLI DISRUPTION MUTANT</scope>
</reference>
<reference key="2">
    <citation type="journal article" date="2001" name="J. Bacteriol.">
        <title>Genome of the bacterium Streptococcus pneumoniae strain R6.</title>
        <authorList>
            <person name="Hoskins J."/>
            <person name="Alborn W.E. Jr."/>
            <person name="Arnold J."/>
            <person name="Blaszczak L.C."/>
            <person name="Burgett S."/>
            <person name="DeHoff B.S."/>
            <person name="Estrem S.T."/>
            <person name="Fritz L."/>
            <person name="Fu D.-J."/>
            <person name="Fuller W."/>
            <person name="Geringer C."/>
            <person name="Gilmour R."/>
            <person name="Glass J.S."/>
            <person name="Khoja H."/>
            <person name="Kraft A.R."/>
            <person name="Lagace R.E."/>
            <person name="LeBlanc D.J."/>
            <person name="Lee L.N."/>
            <person name="Lefkowitz E.J."/>
            <person name="Lu J."/>
            <person name="Matsushima P."/>
            <person name="McAhren S.M."/>
            <person name="McHenney M."/>
            <person name="McLeaster K."/>
            <person name="Mundy C.W."/>
            <person name="Nicas T.I."/>
            <person name="Norris F.H."/>
            <person name="O'Gara M."/>
            <person name="Peery R.B."/>
            <person name="Robertson G.T."/>
            <person name="Rockey P."/>
            <person name="Sun P.-M."/>
            <person name="Winkler M.E."/>
            <person name="Yang Y."/>
            <person name="Young-Bellido M."/>
            <person name="Zhao G."/>
            <person name="Zook C.A."/>
            <person name="Baltz R.H."/>
            <person name="Jaskunas S.R."/>
            <person name="Rosteck P.R. Jr."/>
            <person name="Skatrud P.L."/>
            <person name="Glass J.I."/>
        </authorList>
    </citation>
    <scope>NUCLEOTIDE SEQUENCE [LARGE SCALE GENOMIC DNA]</scope>
    <source>
        <strain>ATCC BAA-255 / R6</strain>
    </source>
</reference>
<reference key="3">
    <citation type="journal article" date="2003" name="Eur. J. Biochem.">
        <title>Characterization of the 16S rRNA- and membrane-binding domains of Streptococcus pneumoniae Era GTPase: structural and functional implications.</title>
        <authorList>
            <person name="Hang J.Q."/>
            <person name="Zhao G."/>
        </authorList>
    </citation>
    <scope>FUNCTION AS GTPASE</scope>
    <scope>SMALL RRNA-BINDING</scope>
    <scope>SUBCELLULAR LOCATION</scope>
</reference>
<dbReference type="EMBL" id="AF072811">
    <property type="protein sequence ID" value="AAD41632.1"/>
    <property type="molecule type" value="Genomic_DNA"/>
</dbReference>
<dbReference type="EMBL" id="AE007317">
    <property type="protein sequence ID" value="AAK99675.1"/>
    <property type="molecule type" value="Genomic_DNA"/>
</dbReference>
<dbReference type="PIR" id="G97980">
    <property type="entry name" value="G97980"/>
</dbReference>
<dbReference type="RefSeq" id="NP_358465.1">
    <property type="nucleotide sequence ID" value="NC_003098.1"/>
</dbReference>
<dbReference type="RefSeq" id="WP_000143265.1">
    <property type="nucleotide sequence ID" value="NC_003098.1"/>
</dbReference>
<dbReference type="SMR" id="P0A3C4"/>
<dbReference type="STRING" id="171101.spr0871"/>
<dbReference type="GeneID" id="45653689"/>
<dbReference type="KEGG" id="spr:spr0871"/>
<dbReference type="PATRIC" id="fig|171101.6.peg.959"/>
<dbReference type="eggNOG" id="COG1159">
    <property type="taxonomic scope" value="Bacteria"/>
</dbReference>
<dbReference type="HOGENOM" id="CLU_038009_1_0_9"/>
<dbReference type="SABIO-RK" id="P0A3C4"/>
<dbReference type="Proteomes" id="UP000000586">
    <property type="component" value="Chromosome"/>
</dbReference>
<dbReference type="GO" id="GO:0005829">
    <property type="term" value="C:cytosol"/>
    <property type="evidence" value="ECO:0000318"/>
    <property type="project" value="GO_Central"/>
</dbReference>
<dbReference type="GO" id="GO:0005886">
    <property type="term" value="C:plasma membrane"/>
    <property type="evidence" value="ECO:0007669"/>
    <property type="project" value="UniProtKB-SubCell"/>
</dbReference>
<dbReference type="GO" id="GO:0005525">
    <property type="term" value="F:GTP binding"/>
    <property type="evidence" value="ECO:0007669"/>
    <property type="project" value="UniProtKB-UniRule"/>
</dbReference>
<dbReference type="GO" id="GO:0003924">
    <property type="term" value="F:GTPase activity"/>
    <property type="evidence" value="ECO:0007669"/>
    <property type="project" value="UniProtKB-UniRule"/>
</dbReference>
<dbReference type="GO" id="GO:0043024">
    <property type="term" value="F:ribosomal small subunit binding"/>
    <property type="evidence" value="ECO:0000318"/>
    <property type="project" value="GO_Central"/>
</dbReference>
<dbReference type="GO" id="GO:0019843">
    <property type="term" value="F:rRNA binding"/>
    <property type="evidence" value="ECO:0000318"/>
    <property type="project" value="GO_Central"/>
</dbReference>
<dbReference type="GO" id="GO:0070181">
    <property type="term" value="F:small ribosomal subunit rRNA binding"/>
    <property type="evidence" value="ECO:0007669"/>
    <property type="project" value="UniProtKB-UniRule"/>
</dbReference>
<dbReference type="GO" id="GO:0000028">
    <property type="term" value="P:ribosomal small subunit assembly"/>
    <property type="evidence" value="ECO:0000318"/>
    <property type="project" value="GO_Central"/>
</dbReference>
<dbReference type="CDD" id="cd04163">
    <property type="entry name" value="Era"/>
    <property type="match status" value="1"/>
</dbReference>
<dbReference type="CDD" id="cd22534">
    <property type="entry name" value="KH-II_Era"/>
    <property type="match status" value="1"/>
</dbReference>
<dbReference type="FunFam" id="3.30.300.20:FF:000003">
    <property type="entry name" value="GTPase Era"/>
    <property type="match status" value="1"/>
</dbReference>
<dbReference type="FunFam" id="3.40.50.300:FF:000094">
    <property type="entry name" value="GTPase Era"/>
    <property type="match status" value="1"/>
</dbReference>
<dbReference type="Gene3D" id="3.30.300.20">
    <property type="match status" value="1"/>
</dbReference>
<dbReference type="Gene3D" id="3.40.50.300">
    <property type="entry name" value="P-loop containing nucleotide triphosphate hydrolases"/>
    <property type="match status" value="1"/>
</dbReference>
<dbReference type="HAMAP" id="MF_00367">
    <property type="entry name" value="GTPase_Era"/>
    <property type="match status" value="1"/>
</dbReference>
<dbReference type="InterPro" id="IPR030388">
    <property type="entry name" value="G_ERA_dom"/>
</dbReference>
<dbReference type="InterPro" id="IPR006073">
    <property type="entry name" value="GTP-bd"/>
</dbReference>
<dbReference type="InterPro" id="IPR005662">
    <property type="entry name" value="GTPase_Era-like"/>
</dbReference>
<dbReference type="InterPro" id="IPR015946">
    <property type="entry name" value="KH_dom-like_a/b"/>
</dbReference>
<dbReference type="InterPro" id="IPR004044">
    <property type="entry name" value="KH_dom_type_2"/>
</dbReference>
<dbReference type="InterPro" id="IPR009019">
    <property type="entry name" value="KH_sf_prok-type"/>
</dbReference>
<dbReference type="InterPro" id="IPR027417">
    <property type="entry name" value="P-loop_NTPase"/>
</dbReference>
<dbReference type="InterPro" id="IPR005225">
    <property type="entry name" value="Small_GTP-bd"/>
</dbReference>
<dbReference type="NCBIfam" id="TIGR00436">
    <property type="entry name" value="era"/>
    <property type="match status" value="1"/>
</dbReference>
<dbReference type="NCBIfam" id="NF000908">
    <property type="entry name" value="PRK00089.1"/>
    <property type="match status" value="1"/>
</dbReference>
<dbReference type="NCBIfam" id="TIGR00231">
    <property type="entry name" value="small_GTP"/>
    <property type="match status" value="1"/>
</dbReference>
<dbReference type="PANTHER" id="PTHR42698">
    <property type="entry name" value="GTPASE ERA"/>
    <property type="match status" value="1"/>
</dbReference>
<dbReference type="PANTHER" id="PTHR42698:SF1">
    <property type="entry name" value="GTPASE ERA, MITOCHONDRIAL"/>
    <property type="match status" value="1"/>
</dbReference>
<dbReference type="Pfam" id="PF07650">
    <property type="entry name" value="KH_2"/>
    <property type="match status" value="1"/>
</dbReference>
<dbReference type="Pfam" id="PF01926">
    <property type="entry name" value="MMR_HSR1"/>
    <property type="match status" value="1"/>
</dbReference>
<dbReference type="SUPFAM" id="SSF52540">
    <property type="entry name" value="P-loop containing nucleoside triphosphate hydrolases"/>
    <property type="match status" value="1"/>
</dbReference>
<dbReference type="SUPFAM" id="SSF54814">
    <property type="entry name" value="Prokaryotic type KH domain (KH-domain type II)"/>
    <property type="match status" value="1"/>
</dbReference>
<dbReference type="PROSITE" id="PS51713">
    <property type="entry name" value="G_ERA"/>
    <property type="match status" value="1"/>
</dbReference>
<dbReference type="PROSITE" id="PS50823">
    <property type="entry name" value="KH_TYPE_2"/>
    <property type="match status" value="1"/>
</dbReference>
<name>ERA_STRR6</name>
<gene>
    <name type="primary">era</name>
    <name type="ordered locus">spr0871</name>
</gene>
<sequence>MTFKSGFVAILGRPNVGKSTFLNHVMGQKIAIMSDKAQTTRNKIMGIYTTDKEQIVFIDTPGIHKPKTALGDFMVESAYSTLREVDTVLFMVPADEARGKGDDMIIERLKAAKVPVILVVNKIDKVHPDQLLSQIDDFRNQMDFKEIVPISALQGNNVSRLVDILSENLDEGFQYFPSDQITDHPERFLVSEMVREKVLHLTREEIPHSVAVVVDSMKRDEETDKVHIRATIMVERDSQKGIIIGKGGAMLKKIGSMARRDIELMLGDKVFLETWVKVKKNWRDKKLDLADFGYNEREY</sequence>